<reference key="1">
    <citation type="journal article" date="2004" name="Genome Res.">
        <title>The genome sequence of Mycoplasma mycoides subsp. mycoides SC type strain PG1T, the causative agent of contagious bovine pleuropneumonia (CBPP).</title>
        <authorList>
            <person name="Westberg J."/>
            <person name="Persson A."/>
            <person name="Holmberg A."/>
            <person name="Goesmann A."/>
            <person name="Lundeberg J."/>
            <person name="Johansson K.-E."/>
            <person name="Pettersson B."/>
            <person name="Uhlen M."/>
        </authorList>
    </citation>
    <scope>NUCLEOTIDE SEQUENCE [LARGE SCALE GENOMIC DNA]</scope>
    <source>
        <strain>CCUG 32753 / NCTC 10114 / PG1</strain>
    </source>
</reference>
<accession>Q6MTE7</accession>
<proteinExistence type="inferred from homology"/>
<name>YBEY_MYCMS</name>
<protein>
    <recommendedName>
        <fullName evidence="1">Endoribonuclease YbeY</fullName>
        <ecNumber evidence="1">3.1.-.-</ecNumber>
    </recommendedName>
</protein>
<feature type="chain" id="PRO_0000102490" description="Endoribonuclease YbeY">
    <location>
        <begin position="1"/>
        <end position="164"/>
    </location>
</feature>
<feature type="binding site" evidence="1">
    <location>
        <position position="117"/>
    </location>
    <ligand>
        <name>Zn(2+)</name>
        <dbReference type="ChEBI" id="CHEBI:29105"/>
        <note>catalytic</note>
    </ligand>
</feature>
<feature type="binding site" evidence="1">
    <location>
        <position position="121"/>
    </location>
    <ligand>
        <name>Zn(2+)</name>
        <dbReference type="ChEBI" id="CHEBI:29105"/>
        <note>catalytic</note>
    </ligand>
</feature>
<feature type="binding site" evidence="1">
    <location>
        <position position="127"/>
    </location>
    <ligand>
        <name>Zn(2+)</name>
        <dbReference type="ChEBI" id="CHEBI:29105"/>
        <note>catalytic</note>
    </ligand>
</feature>
<gene>
    <name evidence="1" type="primary">ybeY</name>
    <name type="ordered locus">MSC_0461</name>
</gene>
<organism>
    <name type="scientific">Mycoplasma mycoides subsp. mycoides SC (strain CCUG 32753 / NCTC 10114 / PG1)</name>
    <dbReference type="NCBI Taxonomy" id="272632"/>
    <lineage>
        <taxon>Bacteria</taxon>
        <taxon>Bacillati</taxon>
        <taxon>Mycoplasmatota</taxon>
        <taxon>Mollicutes</taxon>
        <taxon>Mycoplasmataceae</taxon>
        <taxon>Mycoplasma</taxon>
    </lineage>
</organism>
<sequence length="164" mass="19730">MIRINYFNENDINMDFWKKFCNKILKTAYNYFNFNYDIELSITFVNDLKAQQINQQYRNHSYIADVTSFPVEMTENEIKAIGFRELGDMFINLNEAKRKAIKYNHDLNSEMGFLFVHGFLHLLGYDHEDSNDEKIMFDLQDQILKLNNLEYIIKFNEDDYLESN</sequence>
<comment type="function">
    <text evidence="1">Single strand-specific metallo-endoribonuclease involved in late-stage 70S ribosome quality control and in maturation of the 3' terminus of the 16S rRNA.</text>
</comment>
<comment type="cofactor">
    <cofactor evidence="1">
        <name>Zn(2+)</name>
        <dbReference type="ChEBI" id="CHEBI:29105"/>
    </cofactor>
    <text evidence="1">Binds 1 zinc ion.</text>
</comment>
<comment type="subcellular location">
    <subcellularLocation>
        <location evidence="1">Cytoplasm</location>
    </subcellularLocation>
</comment>
<comment type="similarity">
    <text evidence="1">Belongs to the endoribonuclease YbeY family.</text>
</comment>
<keyword id="KW-0963">Cytoplasm</keyword>
<keyword id="KW-0255">Endonuclease</keyword>
<keyword id="KW-0378">Hydrolase</keyword>
<keyword id="KW-0479">Metal-binding</keyword>
<keyword id="KW-0540">Nuclease</keyword>
<keyword id="KW-1185">Reference proteome</keyword>
<keyword id="KW-0690">Ribosome biogenesis</keyword>
<keyword id="KW-0698">rRNA processing</keyword>
<keyword id="KW-0862">Zinc</keyword>
<evidence type="ECO:0000255" key="1">
    <source>
        <dbReference type="HAMAP-Rule" id="MF_00009"/>
    </source>
</evidence>
<dbReference type="EC" id="3.1.-.-" evidence="1"/>
<dbReference type="EMBL" id="BX293980">
    <property type="protein sequence ID" value="CAE77089.1"/>
    <property type="molecule type" value="Genomic_DNA"/>
</dbReference>
<dbReference type="RefSeq" id="NP_975447.1">
    <property type="nucleotide sequence ID" value="NC_005364.2"/>
</dbReference>
<dbReference type="RefSeq" id="WP_011166645.1">
    <property type="nucleotide sequence ID" value="NC_005364.2"/>
</dbReference>
<dbReference type="SMR" id="Q6MTE7"/>
<dbReference type="STRING" id="272632.MSC_0461"/>
<dbReference type="KEGG" id="mmy:MSC_0461"/>
<dbReference type="PATRIC" id="fig|272632.4.peg.501"/>
<dbReference type="eggNOG" id="COG0319">
    <property type="taxonomic scope" value="Bacteria"/>
</dbReference>
<dbReference type="HOGENOM" id="CLU_106710_3_0_14"/>
<dbReference type="Proteomes" id="UP000001016">
    <property type="component" value="Chromosome"/>
</dbReference>
<dbReference type="GO" id="GO:0005737">
    <property type="term" value="C:cytoplasm"/>
    <property type="evidence" value="ECO:0007669"/>
    <property type="project" value="UniProtKB-SubCell"/>
</dbReference>
<dbReference type="GO" id="GO:0004222">
    <property type="term" value="F:metalloendopeptidase activity"/>
    <property type="evidence" value="ECO:0007669"/>
    <property type="project" value="InterPro"/>
</dbReference>
<dbReference type="GO" id="GO:0004521">
    <property type="term" value="F:RNA endonuclease activity"/>
    <property type="evidence" value="ECO:0007669"/>
    <property type="project" value="UniProtKB-UniRule"/>
</dbReference>
<dbReference type="GO" id="GO:0008270">
    <property type="term" value="F:zinc ion binding"/>
    <property type="evidence" value="ECO:0007669"/>
    <property type="project" value="UniProtKB-UniRule"/>
</dbReference>
<dbReference type="GO" id="GO:0006364">
    <property type="term" value="P:rRNA processing"/>
    <property type="evidence" value="ECO:0007669"/>
    <property type="project" value="UniProtKB-UniRule"/>
</dbReference>
<dbReference type="Gene3D" id="3.40.390.30">
    <property type="entry name" value="Metalloproteases ('zincins'), catalytic domain"/>
    <property type="match status" value="1"/>
</dbReference>
<dbReference type="HAMAP" id="MF_00009">
    <property type="entry name" value="Endoribonucl_YbeY"/>
    <property type="match status" value="1"/>
</dbReference>
<dbReference type="InterPro" id="IPR023091">
    <property type="entry name" value="MetalPrtase_cat_dom_sf_prd"/>
</dbReference>
<dbReference type="InterPro" id="IPR002036">
    <property type="entry name" value="YbeY"/>
</dbReference>
<dbReference type="InterPro" id="IPR020549">
    <property type="entry name" value="YbeY_CS"/>
</dbReference>
<dbReference type="NCBIfam" id="TIGR00043">
    <property type="entry name" value="rRNA maturation RNase YbeY"/>
    <property type="match status" value="1"/>
</dbReference>
<dbReference type="PANTHER" id="PTHR46986">
    <property type="entry name" value="ENDORIBONUCLEASE YBEY, CHLOROPLASTIC"/>
    <property type="match status" value="1"/>
</dbReference>
<dbReference type="PANTHER" id="PTHR46986:SF1">
    <property type="entry name" value="ENDORIBONUCLEASE YBEY, CHLOROPLASTIC"/>
    <property type="match status" value="1"/>
</dbReference>
<dbReference type="Pfam" id="PF02130">
    <property type="entry name" value="YbeY"/>
    <property type="match status" value="1"/>
</dbReference>
<dbReference type="SUPFAM" id="SSF55486">
    <property type="entry name" value="Metalloproteases ('zincins'), catalytic domain"/>
    <property type="match status" value="1"/>
</dbReference>
<dbReference type="PROSITE" id="PS01306">
    <property type="entry name" value="UPF0054"/>
    <property type="match status" value="1"/>
</dbReference>